<feature type="chain" id="PRO_1000186488" description="Bifunctional protein GlmU">
    <location>
        <begin position="1"/>
        <end position="460"/>
    </location>
</feature>
<feature type="region of interest" description="Pyrophosphorylase" evidence="1">
    <location>
        <begin position="1"/>
        <end position="232"/>
    </location>
</feature>
<feature type="region of interest" description="Linker" evidence="1">
    <location>
        <begin position="233"/>
        <end position="253"/>
    </location>
</feature>
<feature type="region of interest" description="N-acetyltransferase" evidence="1">
    <location>
        <begin position="254"/>
        <end position="460"/>
    </location>
</feature>
<feature type="active site" description="Proton acceptor" evidence="1">
    <location>
        <position position="366"/>
    </location>
</feature>
<feature type="binding site" evidence="1">
    <location>
        <begin position="8"/>
        <end position="11"/>
    </location>
    <ligand>
        <name>UDP-N-acetyl-alpha-D-glucosamine</name>
        <dbReference type="ChEBI" id="CHEBI:57705"/>
    </ligand>
</feature>
<feature type="binding site" evidence="1">
    <location>
        <position position="22"/>
    </location>
    <ligand>
        <name>UDP-N-acetyl-alpha-D-glucosamine</name>
        <dbReference type="ChEBI" id="CHEBI:57705"/>
    </ligand>
</feature>
<feature type="binding site" evidence="1">
    <location>
        <position position="73"/>
    </location>
    <ligand>
        <name>UDP-N-acetyl-alpha-D-glucosamine</name>
        <dbReference type="ChEBI" id="CHEBI:57705"/>
    </ligand>
</feature>
<feature type="binding site" evidence="1">
    <location>
        <begin position="78"/>
        <end position="79"/>
    </location>
    <ligand>
        <name>UDP-N-acetyl-alpha-D-glucosamine</name>
        <dbReference type="ChEBI" id="CHEBI:57705"/>
    </ligand>
</feature>
<feature type="binding site" evidence="1">
    <location>
        <begin position="100"/>
        <end position="102"/>
    </location>
    <ligand>
        <name>UDP-N-acetyl-alpha-D-glucosamine</name>
        <dbReference type="ChEBI" id="CHEBI:57705"/>
    </ligand>
</feature>
<feature type="binding site" evidence="1">
    <location>
        <position position="102"/>
    </location>
    <ligand>
        <name>Mg(2+)</name>
        <dbReference type="ChEBI" id="CHEBI:18420"/>
    </ligand>
</feature>
<feature type="binding site" evidence="1">
    <location>
        <position position="137"/>
    </location>
    <ligand>
        <name>UDP-N-acetyl-alpha-D-glucosamine</name>
        <dbReference type="ChEBI" id="CHEBI:57705"/>
    </ligand>
</feature>
<feature type="binding site" evidence="1">
    <location>
        <position position="157"/>
    </location>
    <ligand>
        <name>UDP-N-acetyl-alpha-D-glucosamine</name>
        <dbReference type="ChEBI" id="CHEBI:57705"/>
    </ligand>
</feature>
<feature type="binding site" evidence="1">
    <location>
        <position position="172"/>
    </location>
    <ligand>
        <name>UDP-N-acetyl-alpha-D-glucosamine</name>
        <dbReference type="ChEBI" id="CHEBI:57705"/>
    </ligand>
</feature>
<feature type="binding site" evidence="1">
    <location>
        <position position="230"/>
    </location>
    <ligand>
        <name>Mg(2+)</name>
        <dbReference type="ChEBI" id="CHEBI:18420"/>
    </ligand>
</feature>
<feature type="binding site" evidence="1">
    <location>
        <position position="230"/>
    </location>
    <ligand>
        <name>UDP-N-acetyl-alpha-D-glucosamine</name>
        <dbReference type="ChEBI" id="CHEBI:57705"/>
    </ligand>
</feature>
<feature type="binding site" evidence="1">
    <location>
        <position position="336"/>
    </location>
    <ligand>
        <name>UDP-N-acetyl-alpha-D-glucosamine</name>
        <dbReference type="ChEBI" id="CHEBI:57705"/>
    </ligand>
</feature>
<feature type="binding site" evidence="1">
    <location>
        <position position="354"/>
    </location>
    <ligand>
        <name>UDP-N-acetyl-alpha-D-glucosamine</name>
        <dbReference type="ChEBI" id="CHEBI:57705"/>
    </ligand>
</feature>
<feature type="binding site" evidence="1">
    <location>
        <position position="369"/>
    </location>
    <ligand>
        <name>UDP-N-acetyl-alpha-D-glucosamine</name>
        <dbReference type="ChEBI" id="CHEBI:57705"/>
    </ligand>
</feature>
<feature type="binding site" evidence="1">
    <location>
        <position position="380"/>
    </location>
    <ligand>
        <name>UDP-N-acetyl-alpha-D-glucosamine</name>
        <dbReference type="ChEBI" id="CHEBI:57705"/>
    </ligand>
</feature>
<feature type="binding site" evidence="1">
    <location>
        <position position="383"/>
    </location>
    <ligand>
        <name>acetyl-CoA</name>
        <dbReference type="ChEBI" id="CHEBI:57288"/>
    </ligand>
</feature>
<feature type="binding site" evidence="1">
    <location>
        <begin position="389"/>
        <end position="390"/>
    </location>
    <ligand>
        <name>acetyl-CoA</name>
        <dbReference type="ChEBI" id="CHEBI:57288"/>
    </ligand>
</feature>
<feature type="binding site" evidence="1">
    <location>
        <position position="408"/>
    </location>
    <ligand>
        <name>acetyl-CoA</name>
        <dbReference type="ChEBI" id="CHEBI:57288"/>
    </ligand>
</feature>
<feature type="binding site" evidence="1">
    <location>
        <position position="426"/>
    </location>
    <ligand>
        <name>acetyl-CoA</name>
        <dbReference type="ChEBI" id="CHEBI:57288"/>
    </ligand>
</feature>
<feature type="binding site" evidence="1">
    <location>
        <position position="443"/>
    </location>
    <ligand>
        <name>acetyl-CoA</name>
        <dbReference type="ChEBI" id="CHEBI:57288"/>
    </ligand>
</feature>
<name>GLMU_SHEB2</name>
<dbReference type="EC" id="2.7.7.23" evidence="1"/>
<dbReference type="EC" id="2.3.1.157" evidence="1"/>
<dbReference type="EMBL" id="CP001252">
    <property type="protein sequence ID" value="ACK48774.1"/>
    <property type="molecule type" value="Genomic_DNA"/>
</dbReference>
<dbReference type="RefSeq" id="WP_012588970.1">
    <property type="nucleotide sequence ID" value="NC_011663.1"/>
</dbReference>
<dbReference type="SMR" id="B8EDU8"/>
<dbReference type="KEGG" id="sbp:Sbal223_4308"/>
<dbReference type="HOGENOM" id="CLU_029499_15_2_6"/>
<dbReference type="UniPathway" id="UPA00113">
    <property type="reaction ID" value="UER00532"/>
</dbReference>
<dbReference type="UniPathway" id="UPA00113">
    <property type="reaction ID" value="UER00533"/>
</dbReference>
<dbReference type="UniPathway" id="UPA00973"/>
<dbReference type="Proteomes" id="UP000002507">
    <property type="component" value="Chromosome"/>
</dbReference>
<dbReference type="GO" id="GO:0005737">
    <property type="term" value="C:cytoplasm"/>
    <property type="evidence" value="ECO:0007669"/>
    <property type="project" value="UniProtKB-SubCell"/>
</dbReference>
<dbReference type="GO" id="GO:0016020">
    <property type="term" value="C:membrane"/>
    <property type="evidence" value="ECO:0007669"/>
    <property type="project" value="GOC"/>
</dbReference>
<dbReference type="GO" id="GO:0019134">
    <property type="term" value="F:glucosamine-1-phosphate N-acetyltransferase activity"/>
    <property type="evidence" value="ECO:0007669"/>
    <property type="project" value="UniProtKB-UniRule"/>
</dbReference>
<dbReference type="GO" id="GO:0000287">
    <property type="term" value="F:magnesium ion binding"/>
    <property type="evidence" value="ECO:0007669"/>
    <property type="project" value="UniProtKB-UniRule"/>
</dbReference>
<dbReference type="GO" id="GO:0003977">
    <property type="term" value="F:UDP-N-acetylglucosamine diphosphorylase activity"/>
    <property type="evidence" value="ECO:0007669"/>
    <property type="project" value="UniProtKB-UniRule"/>
</dbReference>
<dbReference type="GO" id="GO:0000902">
    <property type="term" value="P:cell morphogenesis"/>
    <property type="evidence" value="ECO:0007669"/>
    <property type="project" value="UniProtKB-UniRule"/>
</dbReference>
<dbReference type="GO" id="GO:0071555">
    <property type="term" value="P:cell wall organization"/>
    <property type="evidence" value="ECO:0007669"/>
    <property type="project" value="UniProtKB-KW"/>
</dbReference>
<dbReference type="GO" id="GO:0009245">
    <property type="term" value="P:lipid A biosynthetic process"/>
    <property type="evidence" value="ECO:0007669"/>
    <property type="project" value="UniProtKB-UniRule"/>
</dbReference>
<dbReference type="GO" id="GO:0009252">
    <property type="term" value="P:peptidoglycan biosynthetic process"/>
    <property type="evidence" value="ECO:0007669"/>
    <property type="project" value="UniProtKB-UniRule"/>
</dbReference>
<dbReference type="GO" id="GO:0008360">
    <property type="term" value="P:regulation of cell shape"/>
    <property type="evidence" value="ECO:0007669"/>
    <property type="project" value="UniProtKB-KW"/>
</dbReference>
<dbReference type="GO" id="GO:0006048">
    <property type="term" value="P:UDP-N-acetylglucosamine biosynthetic process"/>
    <property type="evidence" value="ECO:0007669"/>
    <property type="project" value="UniProtKB-UniPathway"/>
</dbReference>
<dbReference type="CDD" id="cd02540">
    <property type="entry name" value="GT2_GlmU_N_bac"/>
    <property type="match status" value="1"/>
</dbReference>
<dbReference type="CDD" id="cd03353">
    <property type="entry name" value="LbH_GlmU_C"/>
    <property type="match status" value="1"/>
</dbReference>
<dbReference type="Gene3D" id="2.160.10.10">
    <property type="entry name" value="Hexapeptide repeat proteins"/>
    <property type="match status" value="1"/>
</dbReference>
<dbReference type="Gene3D" id="3.90.550.10">
    <property type="entry name" value="Spore Coat Polysaccharide Biosynthesis Protein SpsA, Chain A"/>
    <property type="match status" value="1"/>
</dbReference>
<dbReference type="HAMAP" id="MF_01631">
    <property type="entry name" value="GlmU"/>
    <property type="match status" value="1"/>
</dbReference>
<dbReference type="InterPro" id="IPR005882">
    <property type="entry name" value="Bifunctional_GlmU"/>
</dbReference>
<dbReference type="InterPro" id="IPR050065">
    <property type="entry name" value="GlmU-like"/>
</dbReference>
<dbReference type="InterPro" id="IPR038009">
    <property type="entry name" value="GlmU_C_LbH"/>
</dbReference>
<dbReference type="InterPro" id="IPR001451">
    <property type="entry name" value="Hexapep"/>
</dbReference>
<dbReference type="InterPro" id="IPR018357">
    <property type="entry name" value="Hexapep_transf_CS"/>
</dbReference>
<dbReference type="InterPro" id="IPR025877">
    <property type="entry name" value="MobA-like_NTP_Trfase"/>
</dbReference>
<dbReference type="InterPro" id="IPR029044">
    <property type="entry name" value="Nucleotide-diphossugar_trans"/>
</dbReference>
<dbReference type="InterPro" id="IPR011004">
    <property type="entry name" value="Trimer_LpxA-like_sf"/>
</dbReference>
<dbReference type="NCBIfam" id="TIGR01173">
    <property type="entry name" value="glmU"/>
    <property type="match status" value="1"/>
</dbReference>
<dbReference type="NCBIfam" id="NF006986">
    <property type="entry name" value="PRK09451.1"/>
    <property type="match status" value="1"/>
</dbReference>
<dbReference type="PANTHER" id="PTHR43584:SF3">
    <property type="entry name" value="BIFUNCTIONAL PROTEIN GLMU"/>
    <property type="match status" value="1"/>
</dbReference>
<dbReference type="PANTHER" id="PTHR43584">
    <property type="entry name" value="NUCLEOTIDYL TRANSFERASE"/>
    <property type="match status" value="1"/>
</dbReference>
<dbReference type="Pfam" id="PF00132">
    <property type="entry name" value="Hexapep"/>
    <property type="match status" value="2"/>
</dbReference>
<dbReference type="Pfam" id="PF12804">
    <property type="entry name" value="NTP_transf_3"/>
    <property type="match status" value="1"/>
</dbReference>
<dbReference type="SUPFAM" id="SSF53448">
    <property type="entry name" value="Nucleotide-diphospho-sugar transferases"/>
    <property type="match status" value="1"/>
</dbReference>
<dbReference type="SUPFAM" id="SSF51161">
    <property type="entry name" value="Trimeric LpxA-like enzymes"/>
    <property type="match status" value="1"/>
</dbReference>
<dbReference type="PROSITE" id="PS00101">
    <property type="entry name" value="HEXAPEP_TRANSFERASES"/>
    <property type="match status" value="1"/>
</dbReference>
<reference key="1">
    <citation type="submission" date="2008-12" db="EMBL/GenBank/DDBJ databases">
        <title>Complete sequence of chromosome of Shewanella baltica OS223.</title>
        <authorList>
            <consortium name="US DOE Joint Genome Institute"/>
            <person name="Lucas S."/>
            <person name="Copeland A."/>
            <person name="Lapidus A."/>
            <person name="Glavina del Rio T."/>
            <person name="Dalin E."/>
            <person name="Tice H."/>
            <person name="Bruce D."/>
            <person name="Goodwin L."/>
            <person name="Pitluck S."/>
            <person name="Chertkov O."/>
            <person name="Meincke L."/>
            <person name="Brettin T."/>
            <person name="Detter J.C."/>
            <person name="Han C."/>
            <person name="Kuske C.R."/>
            <person name="Larimer F."/>
            <person name="Land M."/>
            <person name="Hauser L."/>
            <person name="Kyrpides N."/>
            <person name="Ovchinnikova G."/>
            <person name="Brettar I."/>
            <person name="Rodrigues J."/>
            <person name="Konstantinidis K."/>
            <person name="Tiedje J."/>
        </authorList>
    </citation>
    <scope>NUCLEOTIDE SEQUENCE [LARGE SCALE GENOMIC DNA]</scope>
    <source>
        <strain>OS223</strain>
    </source>
</reference>
<sequence>MALNVVILAAGKGTRMRSDLPKVLHPIAHKSMVQHVIDTAHKVGSDAIQLVYGYGADKLQASLGEQQLNWVLQAEQLGTGHAVAQASPHIADNDTVLILYGDVPLIQQSTLEALLAARPENGVAILTVNLANPMGYGRIVRTPCEGQEQGKVVGIIEQKDATAEQLLINEINTGIMAVPGKQLKAWLSRLSNNNAQGEYYLTDIIAMAHDDGVAIDTAQPQSAIEVEGANNRVQLAQLERAYQAREAEKLMLAGANLRDPSRIDIRGEVTVGMDVMIDINVIFEGKVTLGNNVTIGAGAILIDCEIADNAEIKPYSIIEGAKLGVAASAGPFARLRPGAELKQDAHIGNFVEVKKAVIGVGSKAGHLAYLGDAVIGDGVNIGAGTITCNYDGANKHLTVIEDNVFVGSDTQLVAPVTIGKGATLGAGSTITRDVGENELVITRVKQKHLTGWQRPVKIKK</sequence>
<accession>B8EDU8</accession>
<keyword id="KW-0012">Acyltransferase</keyword>
<keyword id="KW-0133">Cell shape</keyword>
<keyword id="KW-0961">Cell wall biogenesis/degradation</keyword>
<keyword id="KW-0963">Cytoplasm</keyword>
<keyword id="KW-0460">Magnesium</keyword>
<keyword id="KW-0479">Metal-binding</keyword>
<keyword id="KW-0511">Multifunctional enzyme</keyword>
<keyword id="KW-0548">Nucleotidyltransferase</keyword>
<keyword id="KW-0573">Peptidoglycan synthesis</keyword>
<keyword id="KW-0677">Repeat</keyword>
<keyword id="KW-0808">Transferase</keyword>
<protein>
    <recommendedName>
        <fullName evidence="1">Bifunctional protein GlmU</fullName>
    </recommendedName>
    <domain>
        <recommendedName>
            <fullName evidence="1">UDP-N-acetylglucosamine pyrophosphorylase</fullName>
            <ecNumber evidence="1">2.7.7.23</ecNumber>
        </recommendedName>
        <alternativeName>
            <fullName evidence="1">N-acetylglucosamine-1-phosphate uridyltransferase</fullName>
        </alternativeName>
    </domain>
    <domain>
        <recommendedName>
            <fullName evidence="1">Glucosamine-1-phosphate N-acetyltransferase</fullName>
            <ecNumber evidence="1">2.3.1.157</ecNumber>
        </recommendedName>
    </domain>
</protein>
<proteinExistence type="inferred from homology"/>
<comment type="function">
    <text evidence="1">Catalyzes the last two sequential reactions in the de novo biosynthetic pathway for UDP-N-acetylglucosamine (UDP-GlcNAc). The C-terminal domain catalyzes the transfer of acetyl group from acetyl coenzyme A to glucosamine-1-phosphate (GlcN-1-P) to produce N-acetylglucosamine-1-phosphate (GlcNAc-1-P), which is converted into UDP-GlcNAc by the transfer of uridine 5-monophosphate (from uridine 5-triphosphate), a reaction catalyzed by the N-terminal domain.</text>
</comment>
<comment type="catalytic activity">
    <reaction evidence="1">
        <text>alpha-D-glucosamine 1-phosphate + acetyl-CoA = N-acetyl-alpha-D-glucosamine 1-phosphate + CoA + H(+)</text>
        <dbReference type="Rhea" id="RHEA:13725"/>
        <dbReference type="ChEBI" id="CHEBI:15378"/>
        <dbReference type="ChEBI" id="CHEBI:57287"/>
        <dbReference type="ChEBI" id="CHEBI:57288"/>
        <dbReference type="ChEBI" id="CHEBI:57776"/>
        <dbReference type="ChEBI" id="CHEBI:58516"/>
        <dbReference type="EC" id="2.3.1.157"/>
    </reaction>
</comment>
<comment type="catalytic activity">
    <reaction evidence="1">
        <text>N-acetyl-alpha-D-glucosamine 1-phosphate + UTP + H(+) = UDP-N-acetyl-alpha-D-glucosamine + diphosphate</text>
        <dbReference type="Rhea" id="RHEA:13509"/>
        <dbReference type="ChEBI" id="CHEBI:15378"/>
        <dbReference type="ChEBI" id="CHEBI:33019"/>
        <dbReference type="ChEBI" id="CHEBI:46398"/>
        <dbReference type="ChEBI" id="CHEBI:57705"/>
        <dbReference type="ChEBI" id="CHEBI:57776"/>
        <dbReference type="EC" id="2.7.7.23"/>
    </reaction>
</comment>
<comment type="cofactor">
    <cofactor evidence="1">
        <name>Mg(2+)</name>
        <dbReference type="ChEBI" id="CHEBI:18420"/>
    </cofactor>
    <text evidence="1">Binds 1 Mg(2+) ion per subunit.</text>
</comment>
<comment type="pathway">
    <text evidence="1">Nucleotide-sugar biosynthesis; UDP-N-acetyl-alpha-D-glucosamine biosynthesis; N-acetyl-alpha-D-glucosamine 1-phosphate from alpha-D-glucosamine 6-phosphate (route II): step 2/2.</text>
</comment>
<comment type="pathway">
    <text evidence="1">Nucleotide-sugar biosynthesis; UDP-N-acetyl-alpha-D-glucosamine biosynthesis; UDP-N-acetyl-alpha-D-glucosamine from N-acetyl-alpha-D-glucosamine 1-phosphate: step 1/1.</text>
</comment>
<comment type="pathway">
    <text evidence="1">Bacterial outer membrane biogenesis; LPS lipid A biosynthesis.</text>
</comment>
<comment type="subunit">
    <text evidence="1">Homotrimer.</text>
</comment>
<comment type="subcellular location">
    <subcellularLocation>
        <location evidence="1">Cytoplasm</location>
    </subcellularLocation>
</comment>
<comment type="similarity">
    <text evidence="1">In the N-terminal section; belongs to the N-acetylglucosamine-1-phosphate uridyltransferase family.</text>
</comment>
<comment type="similarity">
    <text evidence="1">In the C-terminal section; belongs to the transferase hexapeptide repeat family.</text>
</comment>
<evidence type="ECO:0000255" key="1">
    <source>
        <dbReference type="HAMAP-Rule" id="MF_01631"/>
    </source>
</evidence>
<gene>
    <name evidence="1" type="primary">glmU</name>
    <name type="ordered locus">Sbal223_4308</name>
</gene>
<organism>
    <name type="scientific">Shewanella baltica (strain OS223)</name>
    <dbReference type="NCBI Taxonomy" id="407976"/>
    <lineage>
        <taxon>Bacteria</taxon>
        <taxon>Pseudomonadati</taxon>
        <taxon>Pseudomonadota</taxon>
        <taxon>Gammaproteobacteria</taxon>
        <taxon>Alteromonadales</taxon>
        <taxon>Shewanellaceae</taxon>
        <taxon>Shewanella</taxon>
    </lineage>
</organism>